<accession>Q0I3I5</accession>
<evidence type="ECO:0000255" key="1">
    <source>
        <dbReference type="HAMAP-Rule" id="MF_01395"/>
    </source>
</evidence>
<evidence type="ECO:0000255" key="2">
    <source>
        <dbReference type="PROSITE-ProRule" id="PRU01136"/>
    </source>
</evidence>
<keyword id="KW-0067">ATP-binding</keyword>
<keyword id="KW-0963">Cytoplasm</keyword>
<keyword id="KW-0275">Fatty acid biosynthesis</keyword>
<keyword id="KW-0276">Fatty acid metabolism</keyword>
<keyword id="KW-0444">Lipid biosynthesis</keyword>
<keyword id="KW-0443">Lipid metabolism</keyword>
<keyword id="KW-0479">Metal-binding</keyword>
<keyword id="KW-0547">Nucleotide-binding</keyword>
<keyword id="KW-0808">Transferase</keyword>
<keyword id="KW-0862">Zinc</keyword>
<keyword id="KW-0863">Zinc-finger</keyword>
<organism>
    <name type="scientific">Histophilus somni (strain 129Pt)</name>
    <name type="common">Haemophilus somnus</name>
    <dbReference type="NCBI Taxonomy" id="205914"/>
    <lineage>
        <taxon>Bacteria</taxon>
        <taxon>Pseudomonadati</taxon>
        <taxon>Pseudomonadota</taxon>
        <taxon>Gammaproteobacteria</taxon>
        <taxon>Pasteurellales</taxon>
        <taxon>Pasteurellaceae</taxon>
        <taxon>Histophilus</taxon>
    </lineage>
</organism>
<name>ACCD_HISS1</name>
<protein>
    <recommendedName>
        <fullName evidence="1">Acetyl-coenzyme A carboxylase carboxyl transferase subunit beta</fullName>
        <shortName evidence="1">ACCase subunit beta</shortName>
        <shortName evidence="1">Acetyl-CoA carboxylase carboxyltransferase subunit beta</shortName>
        <ecNumber evidence="1">2.1.3.15</ecNumber>
    </recommendedName>
</protein>
<proteinExistence type="inferred from homology"/>
<sequence length="299" mass="33001">MSWIDRIFSKNTTSNSKKSNVPEGVWTKCTSCEQVLYRDELKRHLEVCPKCGHHMRIDARERLVALLDKDSIVEIAADLEPKDILKFRDLKKYKDRLSAAQKETGEKDALITVSATLYGMPIVVAALNFSFMGGSMGSVVGSKFVQAAEKAIELHCPLVCFSASGGARMQEALFSLMQMAKTSAVLAKMKEKGVPFISVLTDPTLGGVSASFAMLGDINIAEPKALIGFAGPRVIEQTVREKLPEGFQRSEFLLEHGAIDMIVKRSEMRETLANLLSKLMNMPSPFVEPELIQEKSDDV</sequence>
<reference key="1">
    <citation type="journal article" date="2007" name="J. Bacteriol.">
        <title>Complete genome sequence of Haemophilus somnus (Histophilus somni) strain 129Pt and comparison to Haemophilus ducreyi 35000HP and Haemophilus influenzae Rd.</title>
        <authorList>
            <person name="Challacombe J.F."/>
            <person name="Duncan A.J."/>
            <person name="Brettin T.S."/>
            <person name="Bruce D."/>
            <person name="Chertkov O."/>
            <person name="Detter J.C."/>
            <person name="Han C.S."/>
            <person name="Misra M."/>
            <person name="Richardson P."/>
            <person name="Tapia R."/>
            <person name="Thayer N."/>
            <person name="Xie G."/>
            <person name="Inzana T.J."/>
        </authorList>
    </citation>
    <scope>NUCLEOTIDE SEQUENCE [LARGE SCALE GENOMIC DNA]</scope>
    <source>
        <strain>129Pt</strain>
    </source>
</reference>
<comment type="function">
    <text evidence="1">Component of the acetyl coenzyme A carboxylase (ACC) complex. Biotin carboxylase (BC) catalyzes the carboxylation of biotin on its carrier protein (BCCP) and then the CO(2) group is transferred by the transcarboxylase to acetyl-CoA to form malonyl-CoA.</text>
</comment>
<comment type="catalytic activity">
    <reaction evidence="1">
        <text>N(6)-carboxybiotinyl-L-lysyl-[protein] + acetyl-CoA = N(6)-biotinyl-L-lysyl-[protein] + malonyl-CoA</text>
        <dbReference type="Rhea" id="RHEA:54728"/>
        <dbReference type="Rhea" id="RHEA-COMP:10505"/>
        <dbReference type="Rhea" id="RHEA-COMP:10506"/>
        <dbReference type="ChEBI" id="CHEBI:57288"/>
        <dbReference type="ChEBI" id="CHEBI:57384"/>
        <dbReference type="ChEBI" id="CHEBI:83144"/>
        <dbReference type="ChEBI" id="CHEBI:83145"/>
        <dbReference type="EC" id="2.1.3.15"/>
    </reaction>
</comment>
<comment type="cofactor">
    <cofactor evidence="1">
        <name>Zn(2+)</name>
        <dbReference type="ChEBI" id="CHEBI:29105"/>
    </cofactor>
    <text evidence="1">Binds 1 zinc ion per subunit.</text>
</comment>
<comment type="pathway">
    <text evidence="1">Lipid metabolism; malonyl-CoA biosynthesis; malonyl-CoA from acetyl-CoA: step 1/1.</text>
</comment>
<comment type="subunit">
    <text evidence="1">Acetyl-CoA carboxylase is a heterohexamer composed of biotin carboxyl carrier protein (AccB), biotin carboxylase (AccC) and two subunits each of ACCase subunit alpha (AccA) and ACCase subunit beta (AccD).</text>
</comment>
<comment type="subcellular location">
    <subcellularLocation>
        <location evidence="1">Cytoplasm</location>
    </subcellularLocation>
</comment>
<comment type="similarity">
    <text evidence="1">Belongs to the AccD/PCCB family.</text>
</comment>
<dbReference type="EC" id="2.1.3.15" evidence="1"/>
<dbReference type="EMBL" id="CP000436">
    <property type="protein sequence ID" value="ABI25156.1"/>
    <property type="molecule type" value="Genomic_DNA"/>
</dbReference>
<dbReference type="SMR" id="Q0I3I5"/>
<dbReference type="KEGG" id="hso:HS_0881"/>
<dbReference type="eggNOG" id="COG0777">
    <property type="taxonomic scope" value="Bacteria"/>
</dbReference>
<dbReference type="HOGENOM" id="CLU_015486_1_0_6"/>
<dbReference type="UniPathway" id="UPA00655">
    <property type="reaction ID" value="UER00711"/>
</dbReference>
<dbReference type="GO" id="GO:0009329">
    <property type="term" value="C:acetate CoA-transferase complex"/>
    <property type="evidence" value="ECO:0007669"/>
    <property type="project" value="TreeGrafter"/>
</dbReference>
<dbReference type="GO" id="GO:0003989">
    <property type="term" value="F:acetyl-CoA carboxylase activity"/>
    <property type="evidence" value="ECO:0007669"/>
    <property type="project" value="InterPro"/>
</dbReference>
<dbReference type="GO" id="GO:0005524">
    <property type="term" value="F:ATP binding"/>
    <property type="evidence" value="ECO:0007669"/>
    <property type="project" value="UniProtKB-KW"/>
</dbReference>
<dbReference type="GO" id="GO:0016743">
    <property type="term" value="F:carboxyl- or carbamoyltransferase activity"/>
    <property type="evidence" value="ECO:0007669"/>
    <property type="project" value="UniProtKB-UniRule"/>
</dbReference>
<dbReference type="GO" id="GO:0008270">
    <property type="term" value="F:zinc ion binding"/>
    <property type="evidence" value="ECO:0007669"/>
    <property type="project" value="UniProtKB-UniRule"/>
</dbReference>
<dbReference type="GO" id="GO:0006633">
    <property type="term" value="P:fatty acid biosynthetic process"/>
    <property type="evidence" value="ECO:0007669"/>
    <property type="project" value="UniProtKB-KW"/>
</dbReference>
<dbReference type="GO" id="GO:2001295">
    <property type="term" value="P:malonyl-CoA biosynthetic process"/>
    <property type="evidence" value="ECO:0007669"/>
    <property type="project" value="UniProtKB-UniRule"/>
</dbReference>
<dbReference type="Gene3D" id="3.90.226.10">
    <property type="entry name" value="2-enoyl-CoA Hydratase, Chain A, domain 1"/>
    <property type="match status" value="1"/>
</dbReference>
<dbReference type="HAMAP" id="MF_01395">
    <property type="entry name" value="AcetylCoA_CT_beta"/>
    <property type="match status" value="1"/>
</dbReference>
<dbReference type="InterPro" id="IPR034733">
    <property type="entry name" value="AcCoA_carboxyl_beta"/>
</dbReference>
<dbReference type="InterPro" id="IPR000438">
    <property type="entry name" value="Acetyl_CoA_COase_Trfase_b_su"/>
</dbReference>
<dbReference type="InterPro" id="IPR029045">
    <property type="entry name" value="ClpP/crotonase-like_dom_sf"/>
</dbReference>
<dbReference type="InterPro" id="IPR011762">
    <property type="entry name" value="COA_CT_N"/>
</dbReference>
<dbReference type="InterPro" id="IPR041010">
    <property type="entry name" value="Znf-ACC"/>
</dbReference>
<dbReference type="NCBIfam" id="TIGR00515">
    <property type="entry name" value="accD"/>
    <property type="match status" value="1"/>
</dbReference>
<dbReference type="PANTHER" id="PTHR42995">
    <property type="entry name" value="ACETYL-COENZYME A CARBOXYLASE CARBOXYL TRANSFERASE SUBUNIT BETA, CHLOROPLASTIC"/>
    <property type="match status" value="1"/>
</dbReference>
<dbReference type="PANTHER" id="PTHR42995:SF5">
    <property type="entry name" value="ACETYL-COENZYME A CARBOXYLASE CARBOXYL TRANSFERASE SUBUNIT BETA, CHLOROPLASTIC"/>
    <property type="match status" value="1"/>
</dbReference>
<dbReference type="Pfam" id="PF01039">
    <property type="entry name" value="Carboxyl_trans"/>
    <property type="match status" value="1"/>
</dbReference>
<dbReference type="Pfam" id="PF17848">
    <property type="entry name" value="Zn_ribbon_ACC"/>
    <property type="match status" value="1"/>
</dbReference>
<dbReference type="PRINTS" id="PR01070">
    <property type="entry name" value="ACCCTRFRASEB"/>
</dbReference>
<dbReference type="SUPFAM" id="SSF52096">
    <property type="entry name" value="ClpP/crotonase"/>
    <property type="match status" value="1"/>
</dbReference>
<dbReference type="PROSITE" id="PS50980">
    <property type="entry name" value="COA_CT_NTER"/>
    <property type="match status" value="1"/>
</dbReference>
<feature type="chain" id="PRO_0000359000" description="Acetyl-coenzyme A carboxylase carboxyl transferase subunit beta">
    <location>
        <begin position="1"/>
        <end position="299"/>
    </location>
</feature>
<feature type="domain" description="CoA carboxyltransferase N-terminal" evidence="2">
    <location>
        <begin position="25"/>
        <end position="294"/>
    </location>
</feature>
<feature type="zinc finger region" description="C4-type" evidence="1">
    <location>
        <begin position="29"/>
        <end position="51"/>
    </location>
</feature>
<feature type="binding site" evidence="1">
    <location>
        <position position="29"/>
    </location>
    <ligand>
        <name>Zn(2+)</name>
        <dbReference type="ChEBI" id="CHEBI:29105"/>
    </ligand>
</feature>
<feature type="binding site" evidence="1">
    <location>
        <position position="32"/>
    </location>
    <ligand>
        <name>Zn(2+)</name>
        <dbReference type="ChEBI" id="CHEBI:29105"/>
    </ligand>
</feature>
<feature type="binding site" evidence="1">
    <location>
        <position position="48"/>
    </location>
    <ligand>
        <name>Zn(2+)</name>
        <dbReference type="ChEBI" id="CHEBI:29105"/>
    </ligand>
</feature>
<feature type="binding site" evidence="1">
    <location>
        <position position="51"/>
    </location>
    <ligand>
        <name>Zn(2+)</name>
        <dbReference type="ChEBI" id="CHEBI:29105"/>
    </ligand>
</feature>
<gene>
    <name evidence="1" type="primary">accD</name>
    <name type="ordered locus">HS_0881</name>
</gene>